<evidence type="ECO:0000255" key="1">
    <source>
        <dbReference type="HAMAP-Rule" id="MF_00095"/>
    </source>
</evidence>
<gene>
    <name evidence="1" type="primary">sfsA</name>
    <name type="ordered locus">Synpcc7942_2040</name>
</gene>
<organism>
    <name type="scientific">Synechococcus elongatus (strain ATCC 33912 / PCC 7942 / FACHB-805)</name>
    <name type="common">Anacystis nidulans R2</name>
    <dbReference type="NCBI Taxonomy" id="1140"/>
    <lineage>
        <taxon>Bacteria</taxon>
        <taxon>Bacillati</taxon>
        <taxon>Cyanobacteriota</taxon>
        <taxon>Cyanophyceae</taxon>
        <taxon>Synechococcales</taxon>
        <taxon>Synechococcaceae</taxon>
        <taxon>Synechococcus</taxon>
    </lineage>
</organism>
<accession>Q31LJ9</accession>
<reference key="1">
    <citation type="submission" date="2005-08" db="EMBL/GenBank/DDBJ databases">
        <title>Complete sequence of chromosome 1 of Synechococcus elongatus PCC 7942.</title>
        <authorList>
            <consortium name="US DOE Joint Genome Institute"/>
            <person name="Copeland A."/>
            <person name="Lucas S."/>
            <person name="Lapidus A."/>
            <person name="Barry K."/>
            <person name="Detter J.C."/>
            <person name="Glavina T."/>
            <person name="Hammon N."/>
            <person name="Israni S."/>
            <person name="Pitluck S."/>
            <person name="Schmutz J."/>
            <person name="Larimer F."/>
            <person name="Land M."/>
            <person name="Kyrpides N."/>
            <person name="Lykidis A."/>
            <person name="Golden S."/>
            <person name="Richardson P."/>
        </authorList>
    </citation>
    <scope>NUCLEOTIDE SEQUENCE [LARGE SCALE GENOMIC DNA]</scope>
    <source>
        <strain>ATCC 33912 / PCC 7942 / FACHB-805</strain>
    </source>
</reference>
<feature type="chain" id="PRO_1000008038" description="Sugar fermentation stimulation protein homolog">
    <location>
        <begin position="1"/>
        <end position="236"/>
    </location>
</feature>
<sequence>MPQRLYTYPPLLRGRLLQRYKRFFADIELDSGETITAHCPNTGPMTGVCQMGNLVYVSKSDNPKRKLAYTWELIEVTDNEPTWVGVNTGLPNRVVQALLEQRCLPVLGDYGEVQREVPYGENSRIDFRLTGDRPIYVEVKNTTWTAGRLALFPDTVTTRGQKHLRELTAILLEARAVMLYFINRGDCTAFAPGDSADPTYGQLLRTGIAAGLEVYPCQFQISPEGIDFLGVAPLQL</sequence>
<dbReference type="EMBL" id="CP000100">
    <property type="protein sequence ID" value="ABB58070.1"/>
    <property type="molecule type" value="Genomic_DNA"/>
</dbReference>
<dbReference type="RefSeq" id="WP_011244364.1">
    <property type="nucleotide sequence ID" value="NZ_JACJTX010000001.1"/>
</dbReference>
<dbReference type="SMR" id="Q31LJ9"/>
<dbReference type="STRING" id="1140.Synpcc7942_2040"/>
<dbReference type="PaxDb" id="1140-Synpcc7942_2040"/>
<dbReference type="GeneID" id="72430915"/>
<dbReference type="KEGG" id="syf:Synpcc7942_2040"/>
<dbReference type="eggNOG" id="COG1489">
    <property type="taxonomic scope" value="Bacteria"/>
</dbReference>
<dbReference type="HOGENOM" id="CLU_052299_2_0_3"/>
<dbReference type="OrthoDB" id="9802365at2"/>
<dbReference type="BioCyc" id="SYNEL:SYNPCC7942_2040-MONOMER"/>
<dbReference type="Proteomes" id="UP000889800">
    <property type="component" value="Chromosome"/>
</dbReference>
<dbReference type="GO" id="GO:0003677">
    <property type="term" value="F:DNA binding"/>
    <property type="evidence" value="ECO:0007669"/>
    <property type="project" value="InterPro"/>
</dbReference>
<dbReference type="CDD" id="cd22359">
    <property type="entry name" value="SfsA-like_bacterial"/>
    <property type="match status" value="1"/>
</dbReference>
<dbReference type="FunFam" id="2.40.50.580:FF:000001">
    <property type="entry name" value="Sugar fermentation stimulation protein A"/>
    <property type="match status" value="1"/>
</dbReference>
<dbReference type="Gene3D" id="2.40.50.580">
    <property type="match status" value="1"/>
</dbReference>
<dbReference type="Gene3D" id="3.40.1350.60">
    <property type="match status" value="1"/>
</dbReference>
<dbReference type="HAMAP" id="MF_00095">
    <property type="entry name" value="SfsA"/>
    <property type="match status" value="1"/>
</dbReference>
<dbReference type="InterPro" id="IPR005224">
    <property type="entry name" value="SfsA"/>
</dbReference>
<dbReference type="InterPro" id="IPR040452">
    <property type="entry name" value="SfsA_C"/>
</dbReference>
<dbReference type="InterPro" id="IPR041465">
    <property type="entry name" value="SfsA_N"/>
</dbReference>
<dbReference type="NCBIfam" id="TIGR00230">
    <property type="entry name" value="sfsA"/>
    <property type="match status" value="1"/>
</dbReference>
<dbReference type="PANTHER" id="PTHR30545">
    <property type="entry name" value="SUGAR FERMENTATION STIMULATION PROTEIN A"/>
    <property type="match status" value="1"/>
</dbReference>
<dbReference type="PANTHER" id="PTHR30545:SF2">
    <property type="entry name" value="SUGAR FERMENTATION STIMULATION PROTEIN A"/>
    <property type="match status" value="1"/>
</dbReference>
<dbReference type="Pfam" id="PF03749">
    <property type="entry name" value="SfsA"/>
    <property type="match status" value="1"/>
</dbReference>
<dbReference type="Pfam" id="PF17746">
    <property type="entry name" value="SfsA_N"/>
    <property type="match status" value="1"/>
</dbReference>
<comment type="similarity">
    <text evidence="1">Belongs to the SfsA family.</text>
</comment>
<proteinExistence type="inferred from homology"/>
<protein>
    <recommendedName>
        <fullName evidence="1">Sugar fermentation stimulation protein homolog</fullName>
    </recommendedName>
</protein>
<keyword id="KW-1185">Reference proteome</keyword>
<name>SFSA_SYNE7</name>